<keyword id="KW-0687">Ribonucleoprotein</keyword>
<keyword id="KW-0689">Ribosomal protein</keyword>
<keyword id="KW-0694">RNA-binding</keyword>
<keyword id="KW-0699">rRNA-binding</keyword>
<proteinExistence type="inferred from homology"/>
<dbReference type="EMBL" id="FM211187">
    <property type="protein sequence ID" value="CAR69405.1"/>
    <property type="molecule type" value="Genomic_DNA"/>
</dbReference>
<dbReference type="RefSeq" id="WP_001018251.1">
    <property type="nucleotide sequence ID" value="NC_011900.1"/>
</dbReference>
<dbReference type="SMR" id="B8ZM28"/>
<dbReference type="GeneID" id="93847676"/>
<dbReference type="KEGG" id="sne:SPN23F16290"/>
<dbReference type="HOGENOM" id="CLU_148518_0_0_9"/>
<dbReference type="GO" id="GO:0022627">
    <property type="term" value="C:cytosolic small ribosomal subunit"/>
    <property type="evidence" value="ECO:0007669"/>
    <property type="project" value="TreeGrafter"/>
</dbReference>
<dbReference type="GO" id="GO:0019843">
    <property type="term" value="F:rRNA binding"/>
    <property type="evidence" value="ECO:0007669"/>
    <property type="project" value="UniProtKB-UniRule"/>
</dbReference>
<dbReference type="GO" id="GO:0003735">
    <property type="term" value="F:structural constituent of ribosome"/>
    <property type="evidence" value="ECO:0007669"/>
    <property type="project" value="InterPro"/>
</dbReference>
<dbReference type="GO" id="GO:0006412">
    <property type="term" value="P:translation"/>
    <property type="evidence" value="ECO:0007669"/>
    <property type="project" value="UniProtKB-UniRule"/>
</dbReference>
<dbReference type="CDD" id="cd00353">
    <property type="entry name" value="Ribosomal_S15p_S13e"/>
    <property type="match status" value="1"/>
</dbReference>
<dbReference type="FunFam" id="1.10.287.10:FF:000002">
    <property type="entry name" value="30S ribosomal protein S15"/>
    <property type="match status" value="1"/>
</dbReference>
<dbReference type="Gene3D" id="6.10.250.3130">
    <property type="match status" value="1"/>
</dbReference>
<dbReference type="Gene3D" id="1.10.287.10">
    <property type="entry name" value="S15/NS1, RNA-binding"/>
    <property type="match status" value="1"/>
</dbReference>
<dbReference type="HAMAP" id="MF_01343_B">
    <property type="entry name" value="Ribosomal_uS15_B"/>
    <property type="match status" value="1"/>
</dbReference>
<dbReference type="InterPro" id="IPR000589">
    <property type="entry name" value="Ribosomal_uS15"/>
</dbReference>
<dbReference type="InterPro" id="IPR005290">
    <property type="entry name" value="Ribosomal_uS15_bac-type"/>
</dbReference>
<dbReference type="InterPro" id="IPR009068">
    <property type="entry name" value="uS15_NS1_RNA-bd_sf"/>
</dbReference>
<dbReference type="NCBIfam" id="TIGR00952">
    <property type="entry name" value="S15_bact"/>
    <property type="match status" value="1"/>
</dbReference>
<dbReference type="PANTHER" id="PTHR23321">
    <property type="entry name" value="RIBOSOMAL PROTEIN S15, BACTERIAL AND ORGANELLAR"/>
    <property type="match status" value="1"/>
</dbReference>
<dbReference type="PANTHER" id="PTHR23321:SF26">
    <property type="entry name" value="SMALL RIBOSOMAL SUBUNIT PROTEIN US15M"/>
    <property type="match status" value="1"/>
</dbReference>
<dbReference type="Pfam" id="PF00312">
    <property type="entry name" value="Ribosomal_S15"/>
    <property type="match status" value="1"/>
</dbReference>
<dbReference type="SMART" id="SM01387">
    <property type="entry name" value="Ribosomal_S15"/>
    <property type="match status" value="1"/>
</dbReference>
<dbReference type="SUPFAM" id="SSF47060">
    <property type="entry name" value="S15/NS1 RNA-binding domain"/>
    <property type="match status" value="1"/>
</dbReference>
<dbReference type="PROSITE" id="PS00362">
    <property type="entry name" value="RIBOSOMAL_S15"/>
    <property type="match status" value="1"/>
</dbReference>
<name>RS15_STRPJ</name>
<comment type="function">
    <text evidence="1">One of the primary rRNA binding proteins, it binds directly to 16S rRNA where it helps nucleate assembly of the platform of the 30S subunit by binding and bridging several RNA helices of the 16S rRNA.</text>
</comment>
<comment type="function">
    <text evidence="1">Forms an intersubunit bridge (bridge B4) with the 23S rRNA of the 50S subunit in the ribosome.</text>
</comment>
<comment type="subunit">
    <text evidence="1">Part of the 30S ribosomal subunit. Forms a bridge to the 50S subunit in the 70S ribosome, contacting the 23S rRNA.</text>
</comment>
<comment type="similarity">
    <text evidence="1">Belongs to the universal ribosomal protein uS15 family.</text>
</comment>
<organism>
    <name type="scientific">Streptococcus pneumoniae (strain ATCC 700669 / Spain 23F-1)</name>
    <dbReference type="NCBI Taxonomy" id="561276"/>
    <lineage>
        <taxon>Bacteria</taxon>
        <taxon>Bacillati</taxon>
        <taxon>Bacillota</taxon>
        <taxon>Bacilli</taxon>
        <taxon>Lactobacillales</taxon>
        <taxon>Streptococcaceae</taxon>
        <taxon>Streptococcus</taxon>
    </lineage>
</organism>
<sequence length="89" mass="10535">MAISKEKKNEIIAQYARHEGDTGSVEVQVAVLTWEINHLNEHIKQHKKDHATYRGLMKKIGRRRNLLAYLRKNDVNRYRELINSLGLRR</sequence>
<gene>
    <name evidence="1" type="primary">rpsO</name>
    <name type="ordered locus">SPN23F16290</name>
</gene>
<protein>
    <recommendedName>
        <fullName evidence="1">Small ribosomal subunit protein uS15</fullName>
    </recommendedName>
    <alternativeName>
        <fullName evidence="2">30S ribosomal protein S15</fullName>
    </alternativeName>
</protein>
<evidence type="ECO:0000255" key="1">
    <source>
        <dbReference type="HAMAP-Rule" id="MF_01343"/>
    </source>
</evidence>
<evidence type="ECO:0000305" key="2"/>
<accession>B8ZM28</accession>
<feature type="chain" id="PRO_1000166440" description="Small ribosomal subunit protein uS15">
    <location>
        <begin position="1"/>
        <end position="89"/>
    </location>
</feature>
<reference key="1">
    <citation type="journal article" date="2009" name="J. Bacteriol.">
        <title>Role of conjugative elements in the evolution of the multidrug-resistant pandemic clone Streptococcus pneumoniae Spain23F ST81.</title>
        <authorList>
            <person name="Croucher N.J."/>
            <person name="Walker D."/>
            <person name="Romero P."/>
            <person name="Lennard N."/>
            <person name="Paterson G.K."/>
            <person name="Bason N.C."/>
            <person name="Mitchell A.M."/>
            <person name="Quail M.A."/>
            <person name="Andrew P.W."/>
            <person name="Parkhill J."/>
            <person name="Bentley S.D."/>
            <person name="Mitchell T.J."/>
        </authorList>
    </citation>
    <scope>NUCLEOTIDE SEQUENCE [LARGE SCALE GENOMIC DNA]</scope>
    <source>
        <strain>ATCC 700669 / Spain 23F-1</strain>
    </source>
</reference>